<proteinExistence type="inferred from homology"/>
<gene>
    <name evidence="1" type="primary">pnp</name>
    <name type="ordered locus">GOX1586</name>
</gene>
<dbReference type="EC" id="2.7.7.8" evidence="1"/>
<dbReference type="EMBL" id="CP000009">
    <property type="protein sequence ID" value="AAW61327.1"/>
    <property type="molecule type" value="Genomic_DNA"/>
</dbReference>
<dbReference type="RefSeq" id="WP_011253111.1">
    <property type="nucleotide sequence ID" value="NC_006677.1"/>
</dbReference>
<dbReference type="SMR" id="Q5FQL9"/>
<dbReference type="STRING" id="290633.GOX1586"/>
<dbReference type="KEGG" id="gox:GOX1586"/>
<dbReference type="eggNOG" id="COG1185">
    <property type="taxonomic scope" value="Bacteria"/>
</dbReference>
<dbReference type="HOGENOM" id="CLU_004217_2_2_5"/>
<dbReference type="Proteomes" id="UP000006375">
    <property type="component" value="Chromosome"/>
</dbReference>
<dbReference type="GO" id="GO:0005829">
    <property type="term" value="C:cytosol"/>
    <property type="evidence" value="ECO:0007669"/>
    <property type="project" value="TreeGrafter"/>
</dbReference>
<dbReference type="GO" id="GO:0000175">
    <property type="term" value="F:3'-5'-RNA exonuclease activity"/>
    <property type="evidence" value="ECO:0007669"/>
    <property type="project" value="TreeGrafter"/>
</dbReference>
<dbReference type="GO" id="GO:0000287">
    <property type="term" value="F:magnesium ion binding"/>
    <property type="evidence" value="ECO:0007669"/>
    <property type="project" value="UniProtKB-UniRule"/>
</dbReference>
<dbReference type="GO" id="GO:0004654">
    <property type="term" value="F:polyribonucleotide nucleotidyltransferase activity"/>
    <property type="evidence" value="ECO:0007669"/>
    <property type="project" value="UniProtKB-UniRule"/>
</dbReference>
<dbReference type="GO" id="GO:0003723">
    <property type="term" value="F:RNA binding"/>
    <property type="evidence" value="ECO:0007669"/>
    <property type="project" value="UniProtKB-UniRule"/>
</dbReference>
<dbReference type="GO" id="GO:0006402">
    <property type="term" value="P:mRNA catabolic process"/>
    <property type="evidence" value="ECO:0007669"/>
    <property type="project" value="UniProtKB-UniRule"/>
</dbReference>
<dbReference type="GO" id="GO:0006396">
    <property type="term" value="P:RNA processing"/>
    <property type="evidence" value="ECO:0007669"/>
    <property type="project" value="InterPro"/>
</dbReference>
<dbReference type="CDD" id="cd02393">
    <property type="entry name" value="KH-I_PNPase"/>
    <property type="match status" value="1"/>
</dbReference>
<dbReference type="CDD" id="cd11363">
    <property type="entry name" value="RNase_PH_PNPase_1"/>
    <property type="match status" value="1"/>
</dbReference>
<dbReference type="CDD" id="cd11364">
    <property type="entry name" value="RNase_PH_PNPase_2"/>
    <property type="match status" value="1"/>
</dbReference>
<dbReference type="CDD" id="cd04472">
    <property type="entry name" value="S1_PNPase"/>
    <property type="match status" value="1"/>
</dbReference>
<dbReference type="FunFam" id="2.40.50.140:FF:000107">
    <property type="entry name" value="Polyribonucleotide nucleotidyltransferase"/>
    <property type="match status" value="1"/>
</dbReference>
<dbReference type="FunFam" id="3.30.1370.10:FF:000001">
    <property type="entry name" value="Polyribonucleotide nucleotidyltransferase"/>
    <property type="match status" value="1"/>
</dbReference>
<dbReference type="FunFam" id="3.30.230.70:FF:000001">
    <property type="entry name" value="Polyribonucleotide nucleotidyltransferase"/>
    <property type="match status" value="1"/>
</dbReference>
<dbReference type="FunFam" id="3.30.230.70:FF:000002">
    <property type="entry name" value="Polyribonucleotide nucleotidyltransferase"/>
    <property type="match status" value="1"/>
</dbReference>
<dbReference type="Gene3D" id="3.30.230.70">
    <property type="entry name" value="GHMP Kinase, N-terminal domain"/>
    <property type="match status" value="2"/>
</dbReference>
<dbReference type="Gene3D" id="3.30.1370.10">
    <property type="entry name" value="K Homology domain, type 1"/>
    <property type="match status" value="1"/>
</dbReference>
<dbReference type="Gene3D" id="2.40.50.140">
    <property type="entry name" value="Nucleic acid-binding proteins"/>
    <property type="match status" value="1"/>
</dbReference>
<dbReference type="HAMAP" id="MF_01595">
    <property type="entry name" value="PNPase"/>
    <property type="match status" value="1"/>
</dbReference>
<dbReference type="InterPro" id="IPR001247">
    <property type="entry name" value="ExoRNase_PH_dom1"/>
</dbReference>
<dbReference type="InterPro" id="IPR015847">
    <property type="entry name" value="ExoRNase_PH_dom2"/>
</dbReference>
<dbReference type="InterPro" id="IPR036345">
    <property type="entry name" value="ExoRNase_PH_dom2_sf"/>
</dbReference>
<dbReference type="InterPro" id="IPR004087">
    <property type="entry name" value="KH_dom"/>
</dbReference>
<dbReference type="InterPro" id="IPR004088">
    <property type="entry name" value="KH_dom_type_1"/>
</dbReference>
<dbReference type="InterPro" id="IPR036612">
    <property type="entry name" value="KH_dom_type_1_sf"/>
</dbReference>
<dbReference type="InterPro" id="IPR012340">
    <property type="entry name" value="NA-bd_OB-fold"/>
</dbReference>
<dbReference type="InterPro" id="IPR012162">
    <property type="entry name" value="PNPase"/>
</dbReference>
<dbReference type="InterPro" id="IPR027408">
    <property type="entry name" value="PNPase/RNase_PH_dom_sf"/>
</dbReference>
<dbReference type="InterPro" id="IPR015848">
    <property type="entry name" value="PNPase_PH_RNA-bd_bac/org-type"/>
</dbReference>
<dbReference type="InterPro" id="IPR020568">
    <property type="entry name" value="Ribosomal_Su5_D2-typ_SF"/>
</dbReference>
<dbReference type="InterPro" id="IPR003029">
    <property type="entry name" value="S1_domain"/>
</dbReference>
<dbReference type="NCBIfam" id="TIGR03591">
    <property type="entry name" value="polynuc_phos"/>
    <property type="match status" value="1"/>
</dbReference>
<dbReference type="NCBIfam" id="NF008805">
    <property type="entry name" value="PRK11824.1"/>
    <property type="match status" value="1"/>
</dbReference>
<dbReference type="PANTHER" id="PTHR11252">
    <property type="entry name" value="POLYRIBONUCLEOTIDE NUCLEOTIDYLTRANSFERASE"/>
    <property type="match status" value="1"/>
</dbReference>
<dbReference type="PANTHER" id="PTHR11252:SF0">
    <property type="entry name" value="POLYRIBONUCLEOTIDE NUCLEOTIDYLTRANSFERASE 1, MITOCHONDRIAL"/>
    <property type="match status" value="1"/>
</dbReference>
<dbReference type="Pfam" id="PF00013">
    <property type="entry name" value="KH_1"/>
    <property type="match status" value="1"/>
</dbReference>
<dbReference type="Pfam" id="PF03726">
    <property type="entry name" value="PNPase"/>
    <property type="match status" value="1"/>
</dbReference>
<dbReference type="Pfam" id="PF01138">
    <property type="entry name" value="RNase_PH"/>
    <property type="match status" value="2"/>
</dbReference>
<dbReference type="Pfam" id="PF03725">
    <property type="entry name" value="RNase_PH_C"/>
    <property type="match status" value="2"/>
</dbReference>
<dbReference type="Pfam" id="PF00575">
    <property type="entry name" value="S1"/>
    <property type="match status" value="1"/>
</dbReference>
<dbReference type="PIRSF" id="PIRSF005499">
    <property type="entry name" value="PNPase"/>
    <property type="match status" value="1"/>
</dbReference>
<dbReference type="SMART" id="SM00322">
    <property type="entry name" value="KH"/>
    <property type="match status" value="1"/>
</dbReference>
<dbReference type="SMART" id="SM00316">
    <property type="entry name" value="S1"/>
    <property type="match status" value="1"/>
</dbReference>
<dbReference type="SUPFAM" id="SSF54791">
    <property type="entry name" value="Eukaryotic type KH-domain (KH-domain type I)"/>
    <property type="match status" value="1"/>
</dbReference>
<dbReference type="SUPFAM" id="SSF50249">
    <property type="entry name" value="Nucleic acid-binding proteins"/>
    <property type="match status" value="1"/>
</dbReference>
<dbReference type="SUPFAM" id="SSF55666">
    <property type="entry name" value="Ribonuclease PH domain 2-like"/>
    <property type="match status" value="2"/>
</dbReference>
<dbReference type="SUPFAM" id="SSF54211">
    <property type="entry name" value="Ribosomal protein S5 domain 2-like"/>
    <property type="match status" value="2"/>
</dbReference>
<dbReference type="PROSITE" id="PS50084">
    <property type="entry name" value="KH_TYPE_1"/>
    <property type="match status" value="1"/>
</dbReference>
<dbReference type="PROSITE" id="PS50126">
    <property type="entry name" value="S1"/>
    <property type="match status" value="1"/>
</dbReference>
<feature type="chain" id="PRO_0000329666" description="Polyribonucleotide nucleotidyltransferase">
    <location>
        <begin position="1"/>
        <end position="716"/>
    </location>
</feature>
<feature type="domain" description="KH" evidence="1">
    <location>
        <begin position="552"/>
        <end position="611"/>
    </location>
</feature>
<feature type="domain" description="S1 motif" evidence="1">
    <location>
        <begin position="621"/>
        <end position="689"/>
    </location>
</feature>
<feature type="binding site" evidence="1">
    <location>
        <position position="485"/>
    </location>
    <ligand>
        <name>Mg(2+)</name>
        <dbReference type="ChEBI" id="CHEBI:18420"/>
    </ligand>
</feature>
<feature type="binding site" evidence="1">
    <location>
        <position position="491"/>
    </location>
    <ligand>
        <name>Mg(2+)</name>
        <dbReference type="ChEBI" id="CHEBI:18420"/>
    </ligand>
</feature>
<reference key="1">
    <citation type="journal article" date="2005" name="Nat. Biotechnol.">
        <title>Complete genome sequence of the acetic acid bacterium Gluconobacter oxydans.</title>
        <authorList>
            <person name="Prust C."/>
            <person name="Hoffmeister M."/>
            <person name="Liesegang H."/>
            <person name="Wiezer A."/>
            <person name="Fricke W.F."/>
            <person name="Ehrenreich A."/>
            <person name="Gottschalk G."/>
            <person name="Deppenmeier U."/>
        </authorList>
    </citation>
    <scope>NUCLEOTIDE SEQUENCE [LARGE SCALE GENOMIC DNA]</scope>
    <source>
        <strain>621H</strain>
    </source>
</reference>
<protein>
    <recommendedName>
        <fullName evidence="1">Polyribonucleotide nucleotidyltransferase</fullName>
        <ecNumber evidence="1">2.7.7.8</ecNumber>
    </recommendedName>
    <alternativeName>
        <fullName evidence="1">Polynucleotide phosphorylase</fullName>
        <shortName evidence="1">PNPase</shortName>
    </alternativeName>
</protein>
<comment type="function">
    <text evidence="1">Involved in mRNA degradation. Catalyzes the phosphorolysis of single-stranded polyribonucleotides processively in the 3'- to 5'-direction.</text>
</comment>
<comment type="catalytic activity">
    <reaction evidence="1">
        <text>RNA(n+1) + phosphate = RNA(n) + a ribonucleoside 5'-diphosphate</text>
        <dbReference type="Rhea" id="RHEA:22096"/>
        <dbReference type="Rhea" id="RHEA-COMP:14527"/>
        <dbReference type="Rhea" id="RHEA-COMP:17342"/>
        <dbReference type="ChEBI" id="CHEBI:43474"/>
        <dbReference type="ChEBI" id="CHEBI:57930"/>
        <dbReference type="ChEBI" id="CHEBI:140395"/>
        <dbReference type="EC" id="2.7.7.8"/>
    </reaction>
</comment>
<comment type="cofactor">
    <cofactor evidence="1">
        <name>Mg(2+)</name>
        <dbReference type="ChEBI" id="CHEBI:18420"/>
    </cofactor>
</comment>
<comment type="subcellular location">
    <subcellularLocation>
        <location evidence="1">Cytoplasm</location>
    </subcellularLocation>
</comment>
<comment type="similarity">
    <text evidence="1">Belongs to the polyribonucleotide nucleotidyltransferase family.</text>
</comment>
<accession>Q5FQL9</accession>
<organism>
    <name type="scientific">Gluconobacter oxydans (strain 621H)</name>
    <name type="common">Gluconobacter suboxydans</name>
    <dbReference type="NCBI Taxonomy" id="290633"/>
    <lineage>
        <taxon>Bacteria</taxon>
        <taxon>Pseudomonadati</taxon>
        <taxon>Pseudomonadota</taxon>
        <taxon>Alphaproteobacteria</taxon>
        <taxon>Acetobacterales</taxon>
        <taxon>Acetobacteraceae</taxon>
        <taxon>Gluconobacter</taxon>
    </lineage>
</organism>
<sequence>MFDYFRKEIEWAGRPLILETGKVARQADGAVMITYGDTVVLCTAVGAKSVKPGQDFFPLTVNYQEKAYAAGKIPGGFFKREGRPSEAEVLNARLIDRPIRPLFPENFRNEVQITATVLSYDNENDPALVSLIGCSAALTLSGIPFFGPVACARIGRIDGKLVVNPTHDEIKDSTLDLMVAGTAEGVLMVESEASELSEETMLEAVTLGHTSFQPVIDAIIALAEHAAKAPWDLPSLTKEEIALRKRVEKVGNKLMADAYKERQKQARYKKVAEAKDRINEILADEGLDVELAKPMLKELEAQVVRGSILKTGIRIDGRDLKTVRPILAEVGILPRAHGSSLFTRGETQALVVATLGTGQDEQIIDALEGEYRSNFMLHYNFPPYSVGECGRMGSPGRREIGHGKLAWRAIHPLLPSKEAFPYTMRVVSEITESNGSSSMATVCGSSLALMDAGVPLPRPVAGIAMGLIKEDRGYAVLSDILGDEDHLGDMDFKVAGTADGVTALQMDIKITSITPEIMKIALEQAREGRIHILGEMAKALTEGRGEVSGNAPKITTISVPKEKIRDVIGSGGKVIREIVEYSGAKVDIGDDGTVTIAASNDEQAQKAIARIEGIVAEPEIGRIYEGKVVKTADFGAFVNFLGPRDGLVHISELAEGRVAKTSDVVKQGDAVKVKVIGFDDRGKVKLSMRVVDQATGADITESVGAKPGRPPRRDAE</sequence>
<name>PNP_GLUOX</name>
<evidence type="ECO:0000255" key="1">
    <source>
        <dbReference type="HAMAP-Rule" id="MF_01595"/>
    </source>
</evidence>
<keyword id="KW-0963">Cytoplasm</keyword>
<keyword id="KW-0460">Magnesium</keyword>
<keyword id="KW-0479">Metal-binding</keyword>
<keyword id="KW-0548">Nucleotidyltransferase</keyword>
<keyword id="KW-1185">Reference proteome</keyword>
<keyword id="KW-0694">RNA-binding</keyword>
<keyword id="KW-0808">Transferase</keyword>